<proteinExistence type="inferred from homology"/>
<organism>
    <name type="scientific">Pseudomonas aeruginosa (strain ATCC 15692 / DSM 22644 / CIP 104116 / JCM 14847 / LMG 12228 / 1C / PRS 101 / PAO1)</name>
    <dbReference type="NCBI Taxonomy" id="208964"/>
    <lineage>
        <taxon>Bacteria</taxon>
        <taxon>Pseudomonadati</taxon>
        <taxon>Pseudomonadota</taxon>
        <taxon>Gammaproteobacteria</taxon>
        <taxon>Pseudomonadales</taxon>
        <taxon>Pseudomonadaceae</taxon>
        <taxon>Pseudomonas</taxon>
    </lineage>
</organism>
<reference key="1">
    <citation type="journal article" date="2000" name="Nature">
        <title>Complete genome sequence of Pseudomonas aeruginosa PAO1, an opportunistic pathogen.</title>
        <authorList>
            <person name="Stover C.K."/>
            <person name="Pham X.-Q.T."/>
            <person name="Erwin A.L."/>
            <person name="Mizoguchi S.D."/>
            <person name="Warrener P."/>
            <person name="Hickey M.J."/>
            <person name="Brinkman F.S.L."/>
            <person name="Hufnagle W.O."/>
            <person name="Kowalik D.J."/>
            <person name="Lagrou M."/>
            <person name="Garber R.L."/>
            <person name="Goltry L."/>
            <person name="Tolentino E."/>
            <person name="Westbrock-Wadman S."/>
            <person name="Yuan Y."/>
            <person name="Brody L.L."/>
            <person name="Coulter S.N."/>
            <person name="Folger K.R."/>
            <person name="Kas A."/>
            <person name="Larbig K."/>
            <person name="Lim R.M."/>
            <person name="Smith K.A."/>
            <person name="Spencer D.H."/>
            <person name="Wong G.K.-S."/>
            <person name="Wu Z."/>
            <person name="Paulsen I.T."/>
            <person name="Reizer J."/>
            <person name="Saier M.H. Jr."/>
            <person name="Hancock R.E.W."/>
            <person name="Lory S."/>
            <person name="Olson M.V."/>
        </authorList>
    </citation>
    <scope>NUCLEOTIDE SEQUENCE [LARGE SCALE GENOMIC DNA]</scope>
    <source>
        <strain>ATCC 15692 / DSM 22644 / CIP 104116 / JCM 14847 / LMG 12228 / 1C / PRS 101 / PAO1</strain>
    </source>
</reference>
<comment type="function">
    <text evidence="1">Catalyzes the synthesis of activated sulfate.</text>
</comment>
<comment type="catalytic activity">
    <reaction>
        <text>adenosine 5'-phosphosulfate + ATP = 3'-phosphoadenylyl sulfate + ADP + H(+)</text>
        <dbReference type="Rhea" id="RHEA:24152"/>
        <dbReference type="ChEBI" id="CHEBI:15378"/>
        <dbReference type="ChEBI" id="CHEBI:30616"/>
        <dbReference type="ChEBI" id="CHEBI:58243"/>
        <dbReference type="ChEBI" id="CHEBI:58339"/>
        <dbReference type="ChEBI" id="CHEBI:456216"/>
        <dbReference type="EC" id="2.7.1.25"/>
    </reaction>
</comment>
<comment type="pathway">
    <text>Sulfur metabolism; hydrogen sulfide biosynthesis; sulfite from sulfate: step 2/3.</text>
</comment>
<comment type="similarity">
    <text evidence="2">Belongs to the APS kinase family.</text>
</comment>
<sequence length="196" mass="22060">MNPREHGKRSIDNETRSALKRQRPAVIWLTGLSGAGKSTIASALELALFEQKKHTFLLDGDDLRLGLCRNLGYSDEDRTENIRRIAEVAKILLEAGLIVIVATISPFSRDRRLSRELIGIEHFIEVFVDTPLSECERRDPKGLYRKARSGKIENFTGIDSIYETPAQPNITIDTLSEDPDLAVKRIISYLETNQPA</sequence>
<accession>P57702</accession>
<accession>Q9I3V1</accession>
<evidence type="ECO:0000250" key="1"/>
<evidence type="ECO:0000305" key="2"/>
<protein>
    <recommendedName>
        <fullName>Adenylyl-sulfate kinase</fullName>
        <ecNumber>2.7.1.25</ecNumber>
    </recommendedName>
    <alternativeName>
        <fullName>APS kinase</fullName>
    </alternativeName>
    <alternativeName>
        <fullName>ATP adenosine-5'-phosphosulfate 3'-phosphotransferase</fullName>
    </alternativeName>
    <alternativeName>
        <fullName>Adenosine-5'-phosphosulfate kinase</fullName>
    </alternativeName>
</protein>
<feature type="chain" id="PRO_0000105913" description="Adenylyl-sulfate kinase">
    <location>
        <begin position="1"/>
        <end position="196"/>
    </location>
</feature>
<feature type="active site" description="Phosphoserine intermediate" evidence="1">
    <location>
        <position position="105"/>
    </location>
</feature>
<feature type="binding site" evidence="1">
    <location>
        <begin position="31"/>
        <end position="38"/>
    </location>
    <ligand>
        <name>ATP</name>
        <dbReference type="ChEBI" id="CHEBI:30616"/>
    </ligand>
</feature>
<keyword id="KW-0067">ATP-binding</keyword>
<keyword id="KW-0418">Kinase</keyword>
<keyword id="KW-0547">Nucleotide-binding</keyword>
<keyword id="KW-0597">Phosphoprotein</keyword>
<keyword id="KW-1185">Reference proteome</keyword>
<keyword id="KW-0808">Transferase</keyword>
<gene>
    <name type="primary">cysC</name>
    <name type="ordered locus">PA1393</name>
</gene>
<name>CYSC_PSEAE</name>
<dbReference type="EC" id="2.7.1.25"/>
<dbReference type="EMBL" id="AE004091">
    <property type="protein sequence ID" value="AAG04782.1"/>
    <property type="molecule type" value="Genomic_DNA"/>
</dbReference>
<dbReference type="PIR" id="H83472">
    <property type="entry name" value="H83472"/>
</dbReference>
<dbReference type="RefSeq" id="NP_250084.1">
    <property type="nucleotide sequence ID" value="NC_002516.2"/>
</dbReference>
<dbReference type="RefSeq" id="WP_003112412.1">
    <property type="nucleotide sequence ID" value="NZ_QZGE01000005.1"/>
</dbReference>
<dbReference type="SMR" id="P57702"/>
<dbReference type="FunCoup" id="P57702">
    <property type="interactions" value="185"/>
</dbReference>
<dbReference type="STRING" id="208964.PA1393"/>
<dbReference type="PaxDb" id="208964-PA1393"/>
<dbReference type="GeneID" id="877968"/>
<dbReference type="KEGG" id="pae:PA1393"/>
<dbReference type="PATRIC" id="fig|208964.12.peg.1442"/>
<dbReference type="PseudoCAP" id="PA1393"/>
<dbReference type="HOGENOM" id="CLU_046932_1_0_6"/>
<dbReference type="InParanoid" id="P57702"/>
<dbReference type="OrthoDB" id="9804504at2"/>
<dbReference type="PhylomeDB" id="P57702"/>
<dbReference type="BioCyc" id="PAER208964:G1FZ6-1419-MONOMER"/>
<dbReference type="UniPathway" id="UPA00140">
    <property type="reaction ID" value="UER00205"/>
</dbReference>
<dbReference type="Proteomes" id="UP000002438">
    <property type="component" value="Chromosome"/>
</dbReference>
<dbReference type="GO" id="GO:0004020">
    <property type="term" value="F:adenylylsulfate kinase activity"/>
    <property type="evidence" value="ECO:0007669"/>
    <property type="project" value="UniProtKB-UniRule"/>
</dbReference>
<dbReference type="GO" id="GO:0005524">
    <property type="term" value="F:ATP binding"/>
    <property type="evidence" value="ECO:0007669"/>
    <property type="project" value="UniProtKB-UniRule"/>
</dbReference>
<dbReference type="GO" id="GO:0070814">
    <property type="term" value="P:hydrogen sulfide biosynthetic process"/>
    <property type="evidence" value="ECO:0007669"/>
    <property type="project" value="UniProtKB-UniRule"/>
</dbReference>
<dbReference type="GO" id="GO:0000103">
    <property type="term" value="P:sulfate assimilation"/>
    <property type="evidence" value="ECO:0007669"/>
    <property type="project" value="UniProtKB-UniRule"/>
</dbReference>
<dbReference type="CDD" id="cd02027">
    <property type="entry name" value="APSK"/>
    <property type="match status" value="1"/>
</dbReference>
<dbReference type="Gene3D" id="3.40.50.300">
    <property type="entry name" value="P-loop containing nucleotide triphosphate hydrolases"/>
    <property type="match status" value="1"/>
</dbReference>
<dbReference type="HAMAP" id="MF_00065">
    <property type="entry name" value="Adenylyl_sulf_kinase"/>
    <property type="match status" value="1"/>
</dbReference>
<dbReference type="InterPro" id="IPR002891">
    <property type="entry name" value="APS_kinase"/>
</dbReference>
<dbReference type="InterPro" id="IPR027417">
    <property type="entry name" value="P-loop_NTPase"/>
</dbReference>
<dbReference type="InterPro" id="IPR050512">
    <property type="entry name" value="Sulf_AdTrans/APS_kinase"/>
</dbReference>
<dbReference type="NCBIfam" id="TIGR00455">
    <property type="entry name" value="apsK"/>
    <property type="match status" value="1"/>
</dbReference>
<dbReference type="NCBIfam" id="NF003013">
    <property type="entry name" value="PRK03846.1"/>
    <property type="match status" value="1"/>
</dbReference>
<dbReference type="NCBIfam" id="NF004041">
    <property type="entry name" value="PRK05541.1"/>
    <property type="match status" value="1"/>
</dbReference>
<dbReference type="PANTHER" id="PTHR42700:SF3">
    <property type="entry name" value="BIFUNCTIONAL SAT_APS KINASE-RELATED"/>
    <property type="match status" value="1"/>
</dbReference>
<dbReference type="PANTHER" id="PTHR42700">
    <property type="entry name" value="SULFATE ADENYLYLTRANSFERASE"/>
    <property type="match status" value="1"/>
</dbReference>
<dbReference type="Pfam" id="PF01583">
    <property type="entry name" value="APS_kinase"/>
    <property type="match status" value="1"/>
</dbReference>
<dbReference type="SUPFAM" id="SSF52540">
    <property type="entry name" value="P-loop containing nucleoside triphosphate hydrolases"/>
    <property type="match status" value="1"/>
</dbReference>